<comment type="function">
    <text evidence="2">Beta-D-galactopyranosidase that specifically recognizes the beta-glycosidic bonds formed with beta-D-galactopyranose (beta-D-Gal) or N-acetylgalactosamine (beta-D-GalNAc) (PubMed:33584576). May target the galactoside linkages in the exopolysaccharide component of the mycobacterial extracellular polymeric substance (EPS) and help dispersal of Mtb bacteria from a deteriorating biofilm (PubMed:33584576).</text>
</comment>
<comment type="catalytic activity">
    <reaction evidence="2">
        <text>Hydrolysis of terminal non-reducing beta-D-galactose residues in beta-D-galactosides.</text>
        <dbReference type="EC" id="3.2.1.23"/>
    </reaction>
</comment>
<comment type="activity regulation">
    <text evidence="2">Beta-galactosidase activity is activated by Mg(2+) and significantly inhibited by Ca(2+), Cd(2+), Fe(2+), Ni(2+), Cu(2+) and Zn(2+) (PubMed:33584576). Inhibited by EDTA (PubMed:33584576).</text>
</comment>
<comment type="biophysicochemical properties">
    <kinetics>
        <KM evidence="2">0.382 mM for p-nitrophenyl-beta-D-galactopyranoside (pNP-beta-D-Gal)</KM>
    </kinetics>
    <phDependence>
        <text evidence="2">Optimum pH is 8.0 with pNP-beta-D-Gal as substrate.</text>
    </phDependence>
    <temperatureDependence>
        <text evidence="2">Optimum temperature is 40 degrees Celsius with pNP-beta-D-Gal as substrate.</text>
    </temperatureDependence>
</comment>
<comment type="subcellular location">
    <subcellularLocation>
        <location evidence="2">Secreted</location>
        <location evidence="2">Cell wall</location>
    </subcellularLocation>
    <text evidence="2">Localizes preferentially to the poles.</text>
</comment>
<comment type="induction">
    <text evidence="2">Expression is probably maintained throughout planktonic growth at a certain basal level, down-regulated during biofilm growth and promptly up-regulated when dispersal from the biofilm is imminent.</text>
</comment>
<comment type="disruption phenotype">
    <text evidence="2">The knock-down strain shows significantly lower biofilm dispersion compared to the wild type.</text>
</comment>
<comment type="miscellaneous">
    <text evidence="2">Expression in M.smegmatis, which lacks an ortholog of the protein, changes its colony morphology, cell wall permeability and sensitivity to the cell wall perturbing agent SDS (PubMed:33584576). It also reduces the ability to form biofilms and pellicles, and to autoagglutinate (PubMed:33584576).</text>
</comment>
<keyword id="KW-0134">Cell wall</keyword>
<keyword id="KW-0326">Glycosidase</keyword>
<keyword id="KW-0378">Hydrolase</keyword>
<keyword id="KW-1185">Reference proteome</keyword>
<keyword id="KW-0964">Secreted</keyword>
<name>BDGAL_MYCTU</name>
<protein>
    <recommendedName>
        <fullName evidence="3">Beta-D-galactosidase Rv1717</fullName>
        <ecNumber evidence="2">3.2.1.23</ecNumber>
    </recommendedName>
    <alternativeName>
        <fullName evidence="3">Beta-D-galactopyranosidase</fullName>
    </alternativeName>
</protein>
<proteinExistence type="evidence at protein level"/>
<sequence>MKLTRASQAPRYVAPAHHEVSTMRLQGREAGRTERFWVGLSVYRPGGTAEPAPTREETVYVVLDGELVVTVDGAETVLGWLDSVHLAKGELRSIHNRTDRQALLLVTVAHPVAEVA</sequence>
<organism>
    <name type="scientific">Mycobacterium tuberculosis (strain ATCC 25618 / H37Rv)</name>
    <dbReference type="NCBI Taxonomy" id="83332"/>
    <lineage>
        <taxon>Bacteria</taxon>
        <taxon>Bacillati</taxon>
        <taxon>Actinomycetota</taxon>
        <taxon>Actinomycetes</taxon>
        <taxon>Mycobacteriales</taxon>
        <taxon>Mycobacteriaceae</taxon>
        <taxon>Mycobacterium</taxon>
        <taxon>Mycobacterium tuberculosis complex</taxon>
    </lineage>
</organism>
<accession>O86372</accession>
<accession>I6X260</accession>
<accession>Q7D834</accession>
<gene>
    <name evidence="4" type="ordered locus">Rv1717</name>
</gene>
<reference key="1">
    <citation type="journal article" date="1998" name="Nature">
        <title>Deciphering the biology of Mycobacterium tuberculosis from the complete genome sequence.</title>
        <authorList>
            <person name="Cole S.T."/>
            <person name="Brosch R."/>
            <person name="Parkhill J."/>
            <person name="Garnier T."/>
            <person name="Churcher C.M."/>
            <person name="Harris D.E."/>
            <person name="Gordon S.V."/>
            <person name="Eiglmeier K."/>
            <person name="Gas S."/>
            <person name="Barry C.E. III"/>
            <person name="Tekaia F."/>
            <person name="Badcock K."/>
            <person name="Basham D."/>
            <person name="Brown D."/>
            <person name="Chillingworth T."/>
            <person name="Connor R."/>
            <person name="Davies R.M."/>
            <person name="Devlin K."/>
            <person name="Feltwell T."/>
            <person name="Gentles S."/>
            <person name="Hamlin N."/>
            <person name="Holroyd S."/>
            <person name="Hornsby T."/>
            <person name="Jagels K."/>
            <person name="Krogh A."/>
            <person name="McLean J."/>
            <person name="Moule S."/>
            <person name="Murphy L.D."/>
            <person name="Oliver S."/>
            <person name="Osborne J."/>
            <person name="Quail M.A."/>
            <person name="Rajandream M.A."/>
            <person name="Rogers J."/>
            <person name="Rutter S."/>
            <person name="Seeger K."/>
            <person name="Skelton S."/>
            <person name="Squares S."/>
            <person name="Squares R."/>
            <person name="Sulston J.E."/>
            <person name="Taylor K."/>
            <person name="Whitehead S."/>
            <person name="Barrell B.G."/>
        </authorList>
    </citation>
    <scope>NUCLEOTIDE SEQUENCE [LARGE SCALE GENOMIC DNA]</scope>
    <source>
        <strain>ATCC 25618 / H37Rv</strain>
    </source>
</reference>
<reference key="2">
    <citation type="journal article" date="2020" name="Front. Microbiol.">
        <title>Rv1717 is a cell wall-associated beta-galactosidase of Mycobacterium tuberculosis that is involved in biofilm dispersion.</title>
        <authorList>
            <person name="Bharti S."/>
            <person name="Maurya R.K."/>
            <person name="Venugopal U."/>
            <person name="Singh R."/>
            <person name="Akhtar M.S."/>
            <person name="Krishnan M.Y."/>
        </authorList>
    </citation>
    <scope>FUNCTION</scope>
    <scope>CATALYTIC ACTIVITY</scope>
    <scope>ACTIVITY REGULATION</scope>
    <scope>BIOPHYSICOCHEMICAL PROPERTIES</scope>
    <scope>SUBCELLULAR LOCATION</scope>
    <scope>INDUCTION</scope>
    <scope>DISRUPTION PHENOTYPE</scope>
    <scope>EXPRESSION IN M.SMEGMATIS</scope>
    <source>
        <strain>H37Rv</strain>
    </source>
</reference>
<evidence type="ECO:0000255" key="1"/>
<evidence type="ECO:0000269" key="2">
    <source>
    </source>
</evidence>
<evidence type="ECO:0000303" key="3">
    <source>
    </source>
</evidence>
<evidence type="ECO:0000312" key="4">
    <source>
        <dbReference type="EMBL" id="CCP44483.1"/>
    </source>
</evidence>
<feature type="chain" id="PRO_0000456475" description="Beta-D-galactosidase Rv1717">
    <location>
        <begin position="1"/>
        <end position="116"/>
    </location>
</feature>
<feature type="domain" description="Cupin type-2" evidence="1">
    <location>
        <begin position="40"/>
        <end position="107"/>
    </location>
</feature>
<dbReference type="EC" id="3.2.1.23" evidence="2"/>
<dbReference type="EMBL" id="AL123456">
    <property type="protein sequence ID" value="CCP44483.1"/>
    <property type="molecule type" value="Genomic_DNA"/>
</dbReference>
<dbReference type="RefSeq" id="NP_216233.1">
    <property type="nucleotide sequence ID" value="NC_000962.3"/>
</dbReference>
<dbReference type="RefSeq" id="WP_003898986.1">
    <property type="nucleotide sequence ID" value="NZ_NVQJ01000010.1"/>
</dbReference>
<dbReference type="SMR" id="O86372"/>
<dbReference type="STRING" id="83332.Rv1717"/>
<dbReference type="PaxDb" id="83332-Rv1717"/>
<dbReference type="DNASU" id="885166"/>
<dbReference type="GeneID" id="885166"/>
<dbReference type="KEGG" id="mtu:Rv1717"/>
<dbReference type="KEGG" id="mtv:RVBD_1717"/>
<dbReference type="PATRIC" id="fig|83332.111.peg.1907"/>
<dbReference type="TubercuList" id="Rv1717"/>
<dbReference type="eggNOG" id="COG3837">
    <property type="taxonomic scope" value="Bacteria"/>
</dbReference>
<dbReference type="InParanoid" id="O86372"/>
<dbReference type="OrthoDB" id="2886949at2"/>
<dbReference type="PhylomeDB" id="O86372"/>
<dbReference type="Proteomes" id="UP000001584">
    <property type="component" value="Chromosome"/>
</dbReference>
<dbReference type="GO" id="GO:0005576">
    <property type="term" value="C:extracellular region"/>
    <property type="evidence" value="ECO:0007669"/>
    <property type="project" value="UniProtKB-KW"/>
</dbReference>
<dbReference type="GO" id="GO:0016798">
    <property type="term" value="F:hydrolase activity, acting on glycosyl bonds"/>
    <property type="evidence" value="ECO:0007669"/>
    <property type="project" value="UniProtKB-KW"/>
</dbReference>
<dbReference type="CDD" id="cd20299">
    <property type="entry name" value="cupin_YP766765-like"/>
    <property type="match status" value="1"/>
</dbReference>
<dbReference type="Gene3D" id="2.60.120.10">
    <property type="entry name" value="Jelly Rolls"/>
    <property type="match status" value="1"/>
</dbReference>
<dbReference type="InterPro" id="IPR013096">
    <property type="entry name" value="Cupin_2"/>
</dbReference>
<dbReference type="InterPro" id="IPR014710">
    <property type="entry name" value="RmlC-like_jellyroll"/>
</dbReference>
<dbReference type="InterPro" id="IPR011051">
    <property type="entry name" value="RmlC_Cupin_sf"/>
</dbReference>
<dbReference type="Pfam" id="PF07883">
    <property type="entry name" value="Cupin_2"/>
    <property type="match status" value="1"/>
</dbReference>
<dbReference type="SUPFAM" id="SSF51182">
    <property type="entry name" value="RmlC-like cupins"/>
    <property type="match status" value="1"/>
</dbReference>